<dbReference type="EC" id="2.8.1.13" evidence="1"/>
<dbReference type="EMBL" id="CP000804">
    <property type="protein sequence ID" value="ABU57827.1"/>
    <property type="status" value="ALT_INIT"/>
    <property type="molecule type" value="Genomic_DNA"/>
</dbReference>
<dbReference type="RefSeq" id="WP_041331879.1">
    <property type="nucleotide sequence ID" value="NC_009767.1"/>
</dbReference>
<dbReference type="SMR" id="A7NK07"/>
<dbReference type="STRING" id="383372.Rcas_1735"/>
<dbReference type="KEGG" id="rca:Rcas_1735"/>
<dbReference type="eggNOG" id="COG0482">
    <property type="taxonomic scope" value="Bacteria"/>
</dbReference>
<dbReference type="HOGENOM" id="CLU_035188_0_0_0"/>
<dbReference type="OrthoDB" id="9800696at2"/>
<dbReference type="Proteomes" id="UP000000263">
    <property type="component" value="Chromosome"/>
</dbReference>
<dbReference type="GO" id="GO:0005737">
    <property type="term" value="C:cytoplasm"/>
    <property type="evidence" value="ECO:0007669"/>
    <property type="project" value="UniProtKB-SubCell"/>
</dbReference>
<dbReference type="GO" id="GO:0005524">
    <property type="term" value="F:ATP binding"/>
    <property type="evidence" value="ECO:0007669"/>
    <property type="project" value="UniProtKB-KW"/>
</dbReference>
<dbReference type="GO" id="GO:0000049">
    <property type="term" value="F:tRNA binding"/>
    <property type="evidence" value="ECO:0007669"/>
    <property type="project" value="UniProtKB-KW"/>
</dbReference>
<dbReference type="GO" id="GO:0103016">
    <property type="term" value="F:tRNA-uridine 2-sulfurtransferase activity"/>
    <property type="evidence" value="ECO:0007669"/>
    <property type="project" value="UniProtKB-EC"/>
</dbReference>
<dbReference type="GO" id="GO:0002143">
    <property type="term" value="P:tRNA wobble position uridine thiolation"/>
    <property type="evidence" value="ECO:0007669"/>
    <property type="project" value="TreeGrafter"/>
</dbReference>
<dbReference type="CDD" id="cd01998">
    <property type="entry name" value="MnmA_TRMU-like"/>
    <property type="match status" value="1"/>
</dbReference>
<dbReference type="FunFam" id="2.30.30.280:FF:000001">
    <property type="entry name" value="tRNA-specific 2-thiouridylase MnmA"/>
    <property type="match status" value="1"/>
</dbReference>
<dbReference type="FunFam" id="3.40.50.620:FF:000115">
    <property type="entry name" value="tRNA-specific 2-thiouridylase MnmA"/>
    <property type="match status" value="1"/>
</dbReference>
<dbReference type="Gene3D" id="2.30.30.280">
    <property type="entry name" value="Adenine nucleotide alpha hydrolases-like domains"/>
    <property type="match status" value="1"/>
</dbReference>
<dbReference type="Gene3D" id="3.40.50.620">
    <property type="entry name" value="HUPs"/>
    <property type="match status" value="1"/>
</dbReference>
<dbReference type="Gene3D" id="2.40.30.10">
    <property type="entry name" value="Translation factors"/>
    <property type="match status" value="1"/>
</dbReference>
<dbReference type="HAMAP" id="MF_00144">
    <property type="entry name" value="tRNA_thiouridyl_MnmA"/>
    <property type="match status" value="1"/>
</dbReference>
<dbReference type="InterPro" id="IPR004506">
    <property type="entry name" value="MnmA-like"/>
</dbReference>
<dbReference type="InterPro" id="IPR046885">
    <property type="entry name" value="MnmA-like_C"/>
</dbReference>
<dbReference type="InterPro" id="IPR046884">
    <property type="entry name" value="MnmA-like_central"/>
</dbReference>
<dbReference type="InterPro" id="IPR023382">
    <property type="entry name" value="MnmA-like_central_sf"/>
</dbReference>
<dbReference type="InterPro" id="IPR014729">
    <property type="entry name" value="Rossmann-like_a/b/a_fold"/>
</dbReference>
<dbReference type="NCBIfam" id="NF001138">
    <property type="entry name" value="PRK00143.1"/>
    <property type="match status" value="1"/>
</dbReference>
<dbReference type="NCBIfam" id="TIGR00420">
    <property type="entry name" value="trmU"/>
    <property type="match status" value="1"/>
</dbReference>
<dbReference type="PANTHER" id="PTHR11933:SF5">
    <property type="entry name" value="MITOCHONDRIAL TRNA-SPECIFIC 2-THIOURIDYLASE 1"/>
    <property type="match status" value="1"/>
</dbReference>
<dbReference type="PANTHER" id="PTHR11933">
    <property type="entry name" value="TRNA 5-METHYLAMINOMETHYL-2-THIOURIDYLATE -METHYLTRANSFERASE"/>
    <property type="match status" value="1"/>
</dbReference>
<dbReference type="Pfam" id="PF03054">
    <property type="entry name" value="tRNA_Me_trans"/>
    <property type="match status" value="1"/>
</dbReference>
<dbReference type="Pfam" id="PF20258">
    <property type="entry name" value="tRNA_Me_trans_C"/>
    <property type="match status" value="1"/>
</dbReference>
<dbReference type="Pfam" id="PF20259">
    <property type="entry name" value="tRNA_Me_trans_M"/>
    <property type="match status" value="1"/>
</dbReference>
<dbReference type="SUPFAM" id="SSF52402">
    <property type="entry name" value="Adenine nucleotide alpha hydrolases-like"/>
    <property type="match status" value="1"/>
</dbReference>
<accession>A7NK07</accession>
<comment type="function">
    <text evidence="1">Catalyzes the 2-thiolation of uridine at the wobble position (U34) of tRNA, leading to the formation of s(2)U34.</text>
</comment>
<comment type="catalytic activity">
    <reaction evidence="1">
        <text>S-sulfanyl-L-cysteinyl-[protein] + uridine(34) in tRNA + AH2 + ATP = 2-thiouridine(34) in tRNA + L-cysteinyl-[protein] + A + AMP + diphosphate + H(+)</text>
        <dbReference type="Rhea" id="RHEA:47032"/>
        <dbReference type="Rhea" id="RHEA-COMP:10131"/>
        <dbReference type="Rhea" id="RHEA-COMP:11726"/>
        <dbReference type="Rhea" id="RHEA-COMP:11727"/>
        <dbReference type="Rhea" id="RHEA-COMP:11728"/>
        <dbReference type="ChEBI" id="CHEBI:13193"/>
        <dbReference type="ChEBI" id="CHEBI:15378"/>
        <dbReference type="ChEBI" id="CHEBI:17499"/>
        <dbReference type="ChEBI" id="CHEBI:29950"/>
        <dbReference type="ChEBI" id="CHEBI:30616"/>
        <dbReference type="ChEBI" id="CHEBI:33019"/>
        <dbReference type="ChEBI" id="CHEBI:61963"/>
        <dbReference type="ChEBI" id="CHEBI:65315"/>
        <dbReference type="ChEBI" id="CHEBI:87170"/>
        <dbReference type="ChEBI" id="CHEBI:456215"/>
        <dbReference type="EC" id="2.8.1.13"/>
    </reaction>
</comment>
<comment type="subcellular location">
    <subcellularLocation>
        <location evidence="1">Cytoplasm</location>
    </subcellularLocation>
</comment>
<comment type="similarity">
    <text evidence="1">Belongs to the MnmA/TRMU family.</text>
</comment>
<comment type="sequence caution" evidence="2">
    <conflict type="erroneous initiation">
        <sequence resource="EMBL-CDS" id="ABU57827"/>
    </conflict>
</comment>
<sequence>MAKIMIAMSGGVDSSLAAALLHEAGHDVTGVTLHLWEGDDDRLAESLCCSQEMTESARRVCAQLGIPYYVFNYQREFRRSVIEYFLREYASGFTPNPCLECNREIKFRALLARARALGFDYVATGHYARIRVDKTPADHSASPSPNGAQRAVYRLLRAVDEEKDQSYMLYMLGQDDLARLMFPIGEYTKAEVRALAAARGLASANRPESQDICFVPGGDYRNLLREERPDALRPGPILDLEGREVGRHQGLPLYTIGQRRGLGIATGQPMYVMALDVARNAVIVGPESALRRTTLRAERVTFVSGSWPEAPFDCLAQIRAHADAVPARVTPVEPERVEVRFEHPQRAITPGQAIVFYDGAVVLGGGRIARD</sequence>
<feature type="chain" id="PRO_0000349779" description="tRNA-specific 2-thiouridylase MnmA">
    <location>
        <begin position="1"/>
        <end position="371"/>
    </location>
</feature>
<feature type="region of interest" description="Interaction with tRNA" evidence="1">
    <location>
        <begin position="163"/>
        <end position="165"/>
    </location>
</feature>
<feature type="active site" description="Nucleophile" evidence="1">
    <location>
        <position position="101"/>
    </location>
</feature>
<feature type="active site" description="Cysteine persulfide intermediate" evidence="1">
    <location>
        <position position="213"/>
    </location>
</feature>
<feature type="binding site" evidence="1">
    <location>
        <begin position="7"/>
        <end position="14"/>
    </location>
    <ligand>
        <name>ATP</name>
        <dbReference type="ChEBI" id="CHEBI:30616"/>
    </ligand>
</feature>
<feature type="binding site" evidence="1">
    <location>
        <position position="33"/>
    </location>
    <ligand>
        <name>ATP</name>
        <dbReference type="ChEBI" id="CHEBI:30616"/>
    </ligand>
</feature>
<feature type="binding site" evidence="1">
    <location>
        <position position="125"/>
    </location>
    <ligand>
        <name>ATP</name>
        <dbReference type="ChEBI" id="CHEBI:30616"/>
    </ligand>
</feature>
<feature type="site" description="Interaction with tRNA" evidence="1">
    <location>
        <position position="126"/>
    </location>
</feature>
<feature type="site" description="Interaction with tRNA" evidence="1">
    <location>
        <position position="352"/>
    </location>
</feature>
<feature type="disulfide bond" description="Alternate" evidence="1">
    <location>
        <begin position="101"/>
        <end position="213"/>
    </location>
</feature>
<gene>
    <name evidence="1" type="primary">mnmA</name>
    <name type="ordered locus">Rcas_1735</name>
</gene>
<evidence type="ECO:0000255" key="1">
    <source>
        <dbReference type="HAMAP-Rule" id="MF_00144"/>
    </source>
</evidence>
<evidence type="ECO:0000305" key="2"/>
<organism>
    <name type="scientific">Roseiflexus castenholzii (strain DSM 13941 / HLO8)</name>
    <dbReference type="NCBI Taxonomy" id="383372"/>
    <lineage>
        <taxon>Bacteria</taxon>
        <taxon>Bacillati</taxon>
        <taxon>Chloroflexota</taxon>
        <taxon>Chloroflexia</taxon>
        <taxon>Chloroflexales</taxon>
        <taxon>Roseiflexineae</taxon>
        <taxon>Roseiflexaceae</taxon>
        <taxon>Roseiflexus</taxon>
    </lineage>
</organism>
<proteinExistence type="inferred from homology"/>
<name>MNMA_ROSCS</name>
<keyword id="KW-0067">ATP-binding</keyword>
<keyword id="KW-0963">Cytoplasm</keyword>
<keyword id="KW-1015">Disulfide bond</keyword>
<keyword id="KW-0547">Nucleotide-binding</keyword>
<keyword id="KW-1185">Reference proteome</keyword>
<keyword id="KW-0694">RNA-binding</keyword>
<keyword id="KW-0808">Transferase</keyword>
<keyword id="KW-0819">tRNA processing</keyword>
<keyword id="KW-0820">tRNA-binding</keyword>
<protein>
    <recommendedName>
        <fullName evidence="1">tRNA-specific 2-thiouridylase MnmA</fullName>
        <ecNumber evidence="1">2.8.1.13</ecNumber>
    </recommendedName>
</protein>
<reference key="1">
    <citation type="submission" date="2007-08" db="EMBL/GenBank/DDBJ databases">
        <title>Complete sequence of Roseiflexus castenholzii DSM 13941.</title>
        <authorList>
            <consortium name="US DOE Joint Genome Institute"/>
            <person name="Copeland A."/>
            <person name="Lucas S."/>
            <person name="Lapidus A."/>
            <person name="Barry K."/>
            <person name="Glavina del Rio T."/>
            <person name="Dalin E."/>
            <person name="Tice H."/>
            <person name="Pitluck S."/>
            <person name="Thompson L.S."/>
            <person name="Brettin T."/>
            <person name="Bruce D."/>
            <person name="Detter J.C."/>
            <person name="Han C."/>
            <person name="Tapia R."/>
            <person name="Schmutz J."/>
            <person name="Larimer F."/>
            <person name="Land M."/>
            <person name="Hauser L."/>
            <person name="Kyrpides N."/>
            <person name="Mikhailova N."/>
            <person name="Bryant D.A."/>
            <person name="Hanada S."/>
            <person name="Tsukatani Y."/>
            <person name="Richardson P."/>
        </authorList>
    </citation>
    <scope>NUCLEOTIDE SEQUENCE [LARGE SCALE GENOMIC DNA]</scope>
    <source>
        <strain>DSM 13941 / HLO8</strain>
    </source>
</reference>